<evidence type="ECO:0000255" key="1"/>
<evidence type="ECO:0000269" key="2">
    <source>
    </source>
</evidence>
<evidence type="ECO:0000305" key="3"/>
<protein>
    <recommendedName>
        <fullName>Envelope biogenesis factor ElyC</fullName>
    </recommendedName>
    <alternativeName>
        <fullName>Elevated frequency of lysis</fullName>
    </alternativeName>
</protein>
<proteinExistence type="predicted"/>
<organism>
    <name type="scientific">Escherichia coli (strain K12)</name>
    <dbReference type="NCBI Taxonomy" id="83333"/>
    <lineage>
        <taxon>Bacteria</taxon>
        <taxon>Pseudomonadati</taxon>
        <taxon>Pseudomonadota</taxon>
        <taxon>Gammaproteobacteria</taxon>
        <taxon>Enterobacterales</taxon>
        <taxon>Enterobacteriaceae</taxon>
        <taxon>Escherichia</taxon>
    </lineage>
</organism>
<gene>
    <name type="primary">elyC</name>
    <name type="synonym">ycbC</name>
    <name type="ordered locus">b0920</name>
    <name type="ordered locus">JW0903</name>
</gene>
<sequence>MLFTLKKVIGNMLLPLPLMLLIIGAGLALLWFSRFQKTGKIFISIGWLALLLLSLQPVADRLLRPIESTYPTWNNSQKVDYIVVLGGGYTWNPQWAPSSNLINNSLPRLNEGIRLWRENPGSKLIFTGGVAKTNTVSTAEVGARVAQSLGVPREQIITLDLPKDTEEEAAAVKQAIGDAPFLLVTSASHLPRAMIFFQQEGLNPLPAPANQLAIDSPLNPWERAIPSPVWLMHSDRVGYETLGRIWQWLKGSSGEPRQE</sequence>
<feature type="chain" id="PRO_0000168768" description="Envelope biogenesis factor ElyC">
    <location>
        <begin position="1"/>
        <end position="259"/>
    </location>
</feature>
<feature type="transmembrane region" description="Helical" evidence="1">
    <location>
        <begin position="12"/>
        <end position="32"/>
    </location>
</feature>
<feature type="transmembrane region" description="Helical" evidence="1">
    <location>
        <begin position="39"/>
        <end position="59"/>
    </location>
</feature>
<feature type="sequence conflict" description="In Ref. 4; D26440." evidence="3" ref="4">
    <original>Y</original>
    <variation>N</variation>
    <location>
        <position position="89"/>
    </location>
</feature>
<feature type="sequence conflict" description="In Ref. 4; D26440." evidence="3" ref="4">
    <original>GVPREQIITLDLPKDTEEEAA</original>
    <variation>ACRASKLSPWICQKIPKKKLQ</variation>
    <location>
        <begin position="150"/>
        <end position="170"/>
    </location>
</feature>
<dbReference type="EMBL" id="U00096">
    <property type="protein sequence ID" value="AAC74006.1"/>
    <property type="molecule type" value="Genomic_DNA"/>
</dbReference>
<dbReference type="EMBL" id="AP009048">
    <property type="protein sequence ID" value="BAA35666.1"/>
    <property type="molecule type" value="Genomic_DNA"/>
</dbReference>
<dbReference type="EMBL" id="D26440">
    <property type="status" value="NOT_ANNOTATED_CDS"/>
    <property type="molecule type" value="Genomic_DNA"/>
</dbReference>
<dbReference type="PIR" id="G64831">
    <property type="entry name" value="G64831"/>
</dbReference>
<dbReference type="RefSeq" id="NP_415440.1">
    <property type="nucleotide sequence ID" value="NC_000913.3"/>
</dbReference>
<dbReference type="RefSeq" id="WP_000899600.1">
    <property type="nucleotide sequence ID" value="NZ_SSZK01000002.1"/>
</dbReference>
<dbReference type="BioGRID" id="4263426">
    <property type="interactions" value="298"/>
</dbReference>
<dbReference type="BioGRID" id="849920">
    <property type="interactions" value="2"/>
</dbReference>
<dbReference type="FunCoup" id="P0AB01">
    <property type="interactions" value="155"/>
</dbReference>
<dbReference type="IntAct" id="P0AB01">
    <property type="interactions" value="3"/>
</dbReference>
<dbReference type="STRING" id="511145.b0920"/>
<dbReference type="jPOST" id="P0AB01"/>
<dbReference type="PaxDb" id="511145-b0920"/>
<dbReference type="EnsemblBacteria" id="AAC74006">
    <property type="protein sequence ID" value="AAC74006"/>
    <property type="gene ID" value="b0920"/>
</dbReference>
<dbReference type="GeneID" id="945546"/>
<dbReference type="KEGG" id="ecj:JW0903"/>
<dbReference type="KEGG" id="eco:b0920"/>
<dbReference type="KEGG" id="ecoc:C3026_05660"/>
<dbReference type="PATRIC" id="fig|511145.12.peg.951"/>
<dbReference type="EchoBASE" id="EB2085"/>
<dbReference type="eggNOG" id="COG1434">
    <property type="taxonomic scope" value="Bacteria"/>
</dbReference>
<dbReference type="HOGENOM" id="CLU_053514_0_0_6"/>
<dbReference type="InParanoid" id="P0AB01"/>
<dbReference type="OMA" id="LWFTRWQ"/>
<dbReference type="OrthoDB" id="9809813at2"/>
<dbReference type="PhylomeDB" id="P0AB01"/>
<dbReference type="BioCyc" id="EcoCyc:EG12166-MONOMER"/>
<dbReference type="PRO" id="PR:P0AB01"/>
<dbReference type="Proteomes" id="UP000000625">
    <property type="component" value="Chromosome"/>
</dbReference>
<dbReference type="GO" id="GO:0005886">
    <property type="term" value="C:plasma membrane"/>
    <property type="evidence" value="ECO:0000314"/>
    <property type="project" value="EcoCyc"/>
</dbReference>
<dbReference type="GO" id="GO:0071555">
    <property type="term" value="P:cell wall organization"/>
    <property type="evidence" value="ECO:0007669"/>
    <property type="project" value="UniProtKB-KW"/>
</dbReference>
<dbReference type="GO" id="GO:0043164">
    <property type="term" value="P:Gram-negative-bacterium-type cell wall biogenesis"/>
    <property type="evidence" value="ECO:0000315"/>
    <property type="project" value="EcoCyc"/>
</dbReference>
<dbReference type="GO" id="GO:0000270">
    <property type="term" value="P:peptidoglycan metabolic process"/>
    <property type="evidence" value="ECO:0000315"/>
    <property type="project" value="EcoCyc"/>
</dbReference>
<dbReference type="GO" id="GO:0006457">
    <property type="term" value="P:protein folding"/>
    <property type="evidence" value="ECO:0000315"/>
    <property type="project" value="EcoCyc"/>
</dbReference>
<dbReference type="CDD" id="cd06259">
    <property type="entry name" value="YdcF-like"/>
    <property type="match status" value="1"/>
</dbReference>
<dbReference type="FunFam" id="3.40.50.620:FF:000164">
    <property type="entry name" value="Envelope biogenesis factor ElyC"/>
    <property type="match status" value="1"/>
</dbReference>
<dbReference type="Gene3D" id="3.40.50.620">
    <property type="entry name" value="HUPs"/>
    <property type="match status" value="1"/>
</dbReference>
<dbReference type="InterPro" id="IPR051599">
    <property type="entry name" value="Cell_Envelope_Assoc"/>
</dbReference>
<dbReference type="InterPro" id="IPR003848">
    <property type="entry name" value="DUF218"/>
</dbReference>
<dbReference type="InterPro" id="IPR014729">
    <property type="entry name" value="Rossmann-like_a/b/a_fold"/>
</dbReference>
<dbReference type="NCBIfam" id="NF007794">
    <property type="entry name" value="PRK10494.1"/>
    <property type="match status" value="1"/>
</dbReference>
<dbReference type="PANTHER" id="PTHR30336:SF4">
    <property type="entry name" value="ENVELOPE BIOGENESIS FACTOR ELYC"/>
    <property type="match status" value="1"/>
</dbReference>
<dbReference type="PANTHER" id="PTHR30336">
    <property type="entry name" value="INNER MEMBRANE PROTEIN, PROBABLE PERMEASE"/>
    <property type="match status" value="1"/>
</dbReference>
<dbReference type="Pfam" id="PF02698">
    <property type="entry name" value="DUF218"/>
    <property type="match status" value="1"/>
</dbReference>
<accession>P0AB01</accession>
<accession>P36565</accession>
<accession>P75846</accession>
<name>ELYC_ECOLI</name>
<reference key="1">
    <citation type="journal article" date="1996" name="DNA Res.">
        <title>A 718-kb DNA sequence of the Escherichia coli K-12 genome corresponding to the 12.7-28.0 min region on the linkage map.</title>
        <authorList>
            <person name="Oshima T."/>
            <person name="Aiba H."/>
            <person name="Baba T."/>
            <person name="Fujita K."/>
            <person name="Hayashi K."/>
            <person name="Honjo A."/>
            <person name="Ikemoto K."/>
            <person name="Inada T."/>
            <person name="Itoh T."/>
            <person name="Kajihara M."/>
            <person name="Kanai K."/>
            <person name="Kashimoto K."/>
            <person name="Kimura S."/>
            <person name="Kitagawa M."/>
            <person name="Makino K."/>
            <person name="Masuda S."/>
            <person name="Miki T."/>
            <person name="Mizobuchi K."/>
            <person name="Mori H."/>
            <person name="Motomura K."/>
            <person name="Nakamura Y."/>
            <person name="Nashimoto H."/>
            <person name="Nishio Y."/>
            <person name="Saito N."/>
            <person name="Sampei G."/>
            <person name="Seki Y."/>
            <person name="Tagami H."/>
            <person name="Takemoto K."/>
            <person name="Wada C."/>
            <person name="Yamamoto Y."/>
            <person name="Yano M."/>
            <person name="Horiuchi T."/>
        </authorList>
    </citation>
    <scope>NUCLEOTIDE SEQUENCE [LARGE SCALE GENOMIC DNA]</scope>
    <source>
        <strain>K12 / W3110 / ATCC 27325 / DSM 5911</strain>
    </source>
</reference>
<reference key="2">
    <citation type="journal article" date="1997" name="Science">
        <title>The complete genome sequence of Escherichia coli K-12.</title>
        <authorList>
            <person name="Blattner F.R."/>
            <person name="Plunkett G. III"/>
            <person name="Bloch C.A."/>
            <person name="Perna N.T."/>
            <person name="Burland V."/>
            <person name="Riley M."/>
            <person name="Collado-Vides J."/>
            <person name="Glasner J.D."/>
            <person name="Rode C.K."/>
            <person name="Mayhew G.F."/>
            <person name="Gregor J."/>
            <person name="Davis N.W."/>
            <person name="Kirkpatrick H.A."/>
            <person name="Goeden M.A."/>
            <person name="Rose D.J."/>
            <person name="Mau B."/>
            <person name="Shao Y."/>
        </authorList>
    </citation>
    <scope>NUCLEOTIDE SEQUENCE [LARGE SCALE GENOMIC DNA]</scope>
    <source>
        <strain>K12 / MG1655 / ATCC 47076</strain>
    </source>
</reference>
<reference key="3">
    <citation type="journal article" date="2006" name="Mol. Syst. Biol.">
        <title>Highly accurate genome sequences of Escherichia coli K-12 strains MG1655 and W3110.</title>
        <authorList>
            <person name="Hayashi K."/>
            <person name="Morooka N."/>
            <person name="Yamamoto Y."/>
            <person name="Fujita K."/>
            <person name="Isono K."/>
            <person name="Choi S."/>
            <person name="Ohtsubo E."/>
            <person name="Baba T."/>
            <person name="Wanner B.L."/>
            <person name="Mori H."/>
            <person name="Horiuchi T."/>
        </authorList>
    </citation>
    <scope>NUCLEOTIDE SEQUENCE [LARGE SCALE GENOMIC DNA]</scope>
    <source>
        <strain>K12 / W3110 / ATCC 27325 / DSM 5911</strain>
    </source>
</reference>
<reference key="4">
    <citation type="journal article" date="1994" name="Mol. Gen. Genet.">
        <title>New killing system controlled by two genes located immediately upstream of the mukB gene in Escherichia coli.</title>
        <authorList>
            <person name="Feng J."/>
            <person name="Yamanaka K."/>
            <person name="Niki H."/>
            <person name="Ogura T."/>
            <person name="Hiraga S."/>
        </authorList>
    </citation>
    <scope>NUCLEOTIDE SEQUENCE [GENOMIC DNA] OF 1-170</scope>
    <source>
        <strain>K12 / W3110 / ATCC 27325 / DSM 5911</strain>
    </source>
</reference>
<reference key="5">
    <citation type="journal article" date="2014" name="PLoS Genet.">
        <title>A genome-wide screen for bacterial envelope biogenesis mutants identifies a novel factor involved in cell wall precursor metabolism.</title>
        <authorList>
            <person name="Paradis-Bleau C."/>
            <person name="Kritikos G."/>
            <person name="Orlova K."/>
            <person name="Typas A."/>
            <person name="Bernhardt T.G."/>
        </authorList>
    </citation>
    <scope>FUNCTION</scope>
    <scope>DISRUPTION PHENOTYPE</scope>
    <scope>GENE NAME</scope>
    <source>
        <strain>K12 / MG1655 / ATCC 47076</strain>
    </source>
</reference>
<keyword id="KW-0997">Cell inner membrane</keyword>
<keyword id="KW-1003">Cell membrane</keyword>
<keyword id="KW-0961">Cell wall biogenesis/degradation</keyword>
<keyword id="KW-0472">Membrane</keyword>
<keyword id="KW-1185">Reference proteome</keyword>
<keyword id="KW-0812">Transmembrane</keyword>
<keyword id="KW-1133">Transmembrane helix</keyword>
<comment type="function">
    <text evidence="2">Plays a critical role in the metabolism of the essential lipid carrier used for cell wall synthesis.</text>
</comment>
<comment type="subcellular location">
    <subcellularLocation>
        <location evidence="3">Cell inner membrane</location>
        <topology evidence="3">Multi-pass membrane protein</topology>
    </subcellularLocation>
</comment>
<comment type="disruption phenotype">
    <text evidence="2">Deletion causes a severe growth defect at low temperature and an elevated frequency of cell lysis resulting from impaired metabolism of the essential lipid precursor required for peptidoglycan synthesis.</text>
</comment>